<comment type="function">
    <text evidence="1">Catalyzes the formation of methylglyoxal from dihydroxyacetone phosphate.</text>
</comment>
<comment type="catalytic activity">
    <reaction evidence="1">
        <text>dihydroxyacetone phosphate = methylglyoxal + phosphate</text>
        <dbReference type="Rhea" id="RHEA:17937"/>
        <dbReference type="ChEBI" id="CHEBI:17158"/>
        <dbReference type="ChEBI" id="CHEBI:43474"/>
        <dbReference type="ChEBI" id="CHEBI:57642"/>
        <dbReference type="EC" id="4.2.3.3"/>
    </reaction>
</comment>
<comment type="similarity">
    <text evidence="1">Belongs to the methylglyoxal synthase family.</text>
</comment>
<organism>
    <name type="scientific">Brevibacillus brevis (strain 47 / JCM 6285 / NBRC 100599)</name>
    <dbReference type="NCBI Taxonomy" id="358681"/>
    <lineage>
        <taxon>Bacteria</taxon>
        <taxon>Bacillati</taxon>
        <taxon>Bacillota</taxon>
        <taxon>Bacilli</taxon>
        <taxon>Bacillales</taxon>
        <taxon>Paenibacillaceae</taxon>
        <taxon>Brevibacillus</taxon>
    </lineage>
</organism>
<keyword id="KW-0456">Lyase</keyword>
<keyword id="KW-1185">Reference proteome</keyword>
<sequence>MKIALIAHDRMKEQIVQLAMAYESILAKHDLYATGTTGSRIMEATSLSLTRFLSGPLGGDQQIGAMIARNEMDLIIFLRDPLTSQPHEPDIIALLRLCDVHKIPFATNLGSAEIMLKALELGQLDWREVVREENEA</sequence>
<dbReference type="EC" id="4.2.3.3" evidence="1"/>
<dbReference type="EMBL" id="AP008955">
    <property type="protein sequence ID" value="BAH43474.1"/>
    <property type="molecule type" value="Genomic_DNA"/>
</dbReference>
<dbReference type="RefSeq" id="WP_012686180.1">
    <property type="nucleotide sequence ID" value="NC_012491.1"/>
</dbReference>
<dbReference type="SMR" id="C0ZCG5"/>
<dbReference type="STRING" id="358681.BBR47_24970"/>
<dbReference type="KEGG" id="bbe:BBR47_24970"/>
<dbReference type="eggNOG" id="COG1803">
    <property type="taxonomic scope" value="Bacteria"/>
</dbReference>
<dbReference type="HOGENOM" id="CLU_120420_1_0_9"/>
<dbReference type="Proteomes" id="UP000001877">
    <property type="component" value="Chromosome"/>
</dbReference>
<dbReference type="GO" id="GO:0005829">
    <property type="term" value="C:cytosol"/>
    <property type="evidence" value="ECO:0007669"/>
    <property type="project" value="TreeGrafter"/>
</dbReference>
<dbReference type="GO" id="GO:0008929">
    <property type="term" value="F:methylglyoxal synthase activity"/>
    <property type="evidence" value="ECO:0007669"/>
    <property type="project" value="UniProtKB-UniRule"/>
</dbReference>
<dbReference type="GO" id="GO:0019242">
    <property type="term" value="P:methylglyoxal biosynthetic process"/>
    <property type="evidence" value="ECO:0007669"/>
    <property type="project" value="UniProtKB-UniRule"/>
</dbReference>
<dbReference type="CDD" id="cd01422">
    <property type="entry name" value="MGS"/>
    <property type="match status" value="1"/>
</dbReference>
<dbReference type="FunFam" id="3.40.50.1380:FF:000006">
    <property type="entry name" value="Methylglyoxal synthase"/>
    <property type="match status" value="1"/>
</dbReference>
<dbReference type="Gene3D" id="3.40.50.1380">
    <property type="entry name" value="Methylglyoxal synthase-like domain"/>
    <property type="match status" value="1"/>
</dbReference>
<dbReference type="HAMAP" id="MF_00549">
    <property type="entry name" value="Methylglyoxal_synth"/>
    <property type="match status" value="1"/>
</dbReference>
<dbReference type="InterPro" id="IPR004363">
    <property type="entry name" value="Methylgl_synth"/>
</dbReference>
<dbReference type="InterPro" id="IPR018148">
    <property type="entry name" value="Methylglyoxal_synth_AS"/>
</dbReference>
<dbReference type="InterPro" id="IPR011607">
    <property type="entry name" value="MGS-like_dom"/>
</dbReference>
<dbReference type="InterPro" id="IPR036914">
    <property type="entry name" value="MGS-like_dom_sf"/>
</dbReference>
<dbReference type="NCBIfam" id="TIGR00160">
    <property type="entry name" value="MGSA"/>
    <property type="match status" value="1"/>
</dbReference>
<dbReference type="NCBIfam" id="NF003559">
    <property type="entry name" value="PRK05234.1"/>
    <property type="match status" value="1"/>
</dbReference>
<dbReference type="PANTHER" id="PTHR30492">
    <property type="entry name" value="METHYLGLYOXAL SYNTHASE"/>
    <property type="match status" value="1"/>
</dbReference>
<dbReference type="PANTHER" id="PTHR30492:SF0">
    <property type="entry name" value="METHYLGLYOXAL SYNTHASE"/>
    <property type="match status" value="1"/>
</dbReference>
<dbReference type="Pfam" id="PF02142">
    <property type="entry name" value="MGS"/>
    <property type="match status" value="1"/>
</dbReference>
<dbReference type="PIRSF" id="PIRSF006614">
    <property type="entry name" value="Methylglyox_syn"/>
    <property type="match status" value="1"/>
</dbReference>
<dbReference type="SMART" id="SM00851">
    <property type="entry name" value="MGS"/>
    <property type="match status" value="1"/>
</dbReference>
<dbReference type="SUPFAM" id="SSF52335">
    <property type="entry name" value="Methylglyoxal synthase-like"/>
    <property type="match status" value="1"/>
</dbReference>
<dbReference type="PROSITE" id="PS01335">
    <property type="entry name" value="METHYLGLYOXAL_SYNTH"/>
    <property type="match status" value="1"/>
</dbReference>
<dbReference type="PROSITE" id="PS51855">
    <property type="entry name" value="MGS"/>
    <property type="match status" value="1"/>
</dbReference>
<name>MGSA_BREBN</name>
<accession>C0ZCG5</accession>
<feature type="chain" id="PRO_1000146621" description="Methylglyoxal synthase">
    <location>
        <begin position="1"/>
        <end position="136"/>
    </location>
</feature>
<feature type="domain" description="MGS-like" evidence="1">
    <location>
        <begin position="1"/>
        <end position="136"/>
    </location>
</feature>
<feature type="active site" description="Proton donor/acceptor" evidence="1">
    <location>
        <position position="60"/>
    </location>
</feature>
<feature type="binding site" evidence="1">
    <location>
        <position position="8"/>
    </location>
    <ligand>
        <name>substrate</name>
    </ligand>
</feature>
<feature type="binding site" evidence="1">
    <location>
        <position position="12"/>
    </location>
    <ligand>
        <name>substrate</name>
    </ligand>
</feature>
<feature type="binding site" evidence="1">
    <location>
        <begin position="34"/>
        <end position="37"/>
    </location>
    <ligand>
        <name>substrate</name>
    </ligand>
</feature>
<feature type="binding site" evidence="1">
    <location>
        <begin position="54"/>
        <end position="55"/>
    </location>
    <ligand>
        <name>substrate</name>
    </ligand>
</feature>
<feature type="binding site" evidence="1">
    <location>
        <position position="87"/>
    </location>
    <ligand>
        <name>substrate</name>
    </ligand>
</feature>
<reference key="1">
    <citation type="submission" date="2005-03" db="EMBL/GenBank/DDBJ databases">
        <title>Brevibacillus brevis strain 47, complete genome.</title>
        <authorList>
            <person name="Hosoyama A."/>
            <person name="Yamada R."/>
            <person name="Hongo Y."/>
            <person name="Terui Y."/>
            <person name="Ankai A."/>
            <person name="Masuyama W."/>
            <person name="Sekiguchi M."/>
            <person name="Takeda T."/>
            <person name="Asano K."/>
            <person name="Ohji S."/>
            <person name="Ichikawa N."/>
            <person name="Narita S."/>
            <person name="Aoki N."/>
            <person name="Miura H."/>
            <person name="Matsushita S."/>
            <person name="Sekigawa T."/>
            <person name="Yamagata H."/>
            <person name="Yoshikawa H."/>
            <person name="Udaka S."/>
            <person name="Tanikawa S."/>
            <person name="Fujita N."/>
        </authorList>
    </citation>
    <scope>NUCLEOTIDE SEQUENCE [LARGE SCALE GENOMIC DNA]</scope>
    <source>
        <strain>47 / JCM 6285 / NBRC 100599</strain>
    </source>
</reference>
<evidence type="ECO:0000255" key="1">
    <source>
        <dbReference type="HAMAP-Rule" id="MF_00549"/>
    </source>
</evidence>
<gene>
    <name evidence="1" type="primary">mgsA</name>
    <name type="ordered locus">BBR47_24970</name>
</gene>
<protein>
    <recommendedName>
        <fullName evidence="1">Methylglyoxal synthase</fullName>
        <shortName evidence="1">MGS</shortName>
        <ecNumber evidence="1">4.2.3.3</ecNumber>
    </recommendedName>
</protein>
<proteinExistence type="inferred from homology"/>